<protein>
    <recommendedName>
        <fullName>Dihydrofolate reductase</fullName>
        <ecNumber>1.5.1.3</ecNumber>
    </recommendedName>
</protein>
<sequence>MTMVGLIWAQATSGVIGRGGDIPWRLPEDQAHFREITMGHTIVMGRRTWDSLPAKVRPLPGRRNVVLSRQADFMASGAEVVGSLEEALTSPETWVIGGGQVYALALPYATRCEVTEVDIGLPREAGDALAPVLDETWRGETGEWRFSRSGLRYRLYSYHRS</sequence>
<proteinExistence type="evidence at protein level"/>
<gene>
    <name type="primary">folA</name>
    <name type="synonym">dfrA</name>
    <name type="ordered locus">Rv2763c</name>
    <name type="ORF">MTV002.28c</name>
</gene>
<dbReference type="EC" id="1.5.1.3"/>
<dbReference type="EMBL" id="AL123456">
    <property type="protein sequence ID" value="CCP45562.1"/>
    <property type="status" value="ALT_INIT"/>
    <property type="molecule type" value="Genomic_DNA"/>
</dbReference>
<dbReference type="PIR" id="B70881">
    <property type="entry name" value="B70881"/>
</dbReference>
<dbReference type="RefSeq" id="NP_217279.1">
    <property type="nucleotide sequence ID" value="NC_000962.3"/>
</dbReference>
<dbReference type="PDB" id="1DF7">
    <property type="method" value="X-ray"/>
    <property type="resolution" value="1.70 A"/>
    <property type="chains" value="A=3-161"/>
</dbReference>
<dbReference type="PDB" id="1DG5">
    <property type="method" value="X-ray"/>
    <property type="resolution" value="2.00 A"/>
    <property type="chains" value="A=3-161"/>
</dbReference>
<dbReference type="PDB" id="1DG7">
    <property type="method" value="X-ray"/>
    <property type="resolution" value="1.80 A"/>
    <property type="chains" value="A=3-161"/>
</dbReference>
<dbReference type="PDB" id="1DG8">
    <property type="method" value="X-ray"/>
    <property type="resolution" value="2.00 A"/>
    <property type="chains" value="A=3-161"/>
</dbReference>
<dbReference type="PDB" id="2CIG">
    <property type="method" value="X-ray"/>
    <property type="resolution" value="1.90 A"/>
    <property type="chains" value="A=3-161"/>
</dbReference>
<dbReference type="PDB" id="4KL9">
    <property type="method" value="X-ray"/>
    <property type="resolution" value="1.39 A"/>
    <property type="chains" value="A=3-161"/>
</dbReference>
<dbReference type="PDB" id="4KLX">
    <property type="method" value="X-ray"/>
    <property type="resolution" value="1.23 A"/>
    <property type="chains" value="A/B=3-161"/>
</dbReference>
<dbReference type="PDB" id="4KM0">
    <property type="method" value="X-ray"/>
    <property type="resolution" value="1.30 A"/>
    <property type="chains" value="A/B=3-161"/>
</dbReference>
<dbReference type="PDB" id="4KM2">
    <property type="method" value="X-ray"/>
    <property type="resolution" value="1.40 A"/>
    <property type="chains" value="A/B=3-161"/>
</dbReference>
<dbReference type="PDB" id="4KNE">
    <property type="method" value="X-ray"/>
    <property type="resolution" value="2.00 A"/>
    <property type="chains" value="A/B=3-161"/>
</dbReference>
<dbReference type="PDB" id="4M2X">
    <property type="method" value="X-ray"/>
    <property type="resolution" value="2.26 A"/>
    <property type="chains" value="A/C/E/G=3-161"/>
</dbReference>
<dbReference type="PDB" id="5JA3">
    <property type="method" value="X-ray"/>
    <property type="resolution" value="1.81 A"/>
    <property type="chains" value="A/B/C/D=3-161"/>
</dbReference>
<dbReference type="PDB" id="5SCM">
    <property type="method" value="X-ray"/>
    <property type="resolution" value="1.65 A"/>
    <property type="chains" value="A=3-161"/>
</dbReference>
<dbReference type="PDB" id="5SCN">
    <property type="method" value="X-ray"/>
    <property type="resolution" value="1.45 A"/>
    <property type="chains" value="A=3-161"/>
</dbReference>
<dbReference type="PDB" id="5SCO">
    <property type="method" value="X-ray"/>
    <property type="resolution" value="1.30 A"/>
    <property type="chains" value="A=3-161"/>
</dbReference>
<dbReference type="PDB" id="5SCP">
    <property type="method" value="X-ray"/>
    <property type="resolution" value="1.80 A"/>
    <property type="chains" value="A/B=3-161"/>
</dbReference>
<dbReference type="PDB" id="5SCQ">
    <property type="method" value="X-ray"/>
    <property type="resolution" value="1.65 A"/>
    <property type="chains" value="A=3-161"/>
</dbReference>
<dbReference type="PDB" id="5SCR">
    <property type="method" value="X-ray"/>
    <property type="resolution" value="1.95 A"/>
    <property type="chains" value="A=3-161"/>
</dbReference>
<dbReference type="PDB" id="5SCS">
    <property type="method" value="X-ray"/>
    <property type="resolution" value="1.55 A"/>
    <property type="chains" value="A=3-161"/>
</dbReference>
<dbReference type="PDB" id="5SCT">
    <property type="method" value="X-ray"/>
    <property type="resolution" value="1.55 A"/>
    <property type="chains" value="A=3-161"/>
</dbReference>
<dbReference type="PDB" id="5SCU">
    <property type="method" value="X-ray"/>
    <property type="resolution" value="1.65 A"/>
    <property type="chains" value="A=3-161"/>
</dbReference>
<dbReference type="PDB" id="5SCV">
    <property type="method" value="X-ray"/>
    <property type="resolution" value="1.55 A"/>
    <property type="chains" value="A/B=3-161"/>
</dbReference>
<dbReference type="PDB" id="5SCW">
    <property type="method" value="X-ray"/>
    <property type="resolution" value="1.75 A"/>
    <property type="chains" value="A=3-161"/>
</dbReference>
<dbReference type="PDB" id="5SCX">
    <property type="method" value="X-ray"/>
    <property type="resolution" value="1.30 A"/>
    <property type="chains" value="A=3-161"/>
</dbReference>
<dbReference type="PDB" id="5SCY">
    <property type="method" value="X-ray"/>
    <property type="resolution" value="1.40 A"/>
    <property type="chains" value="A=3-161"/>
</dbReference>
<dbReference type="PDB" id="5SCZ">
    <property type="method" value="X-ray"/>
    <property type="resolution" value="1.75 A"/>
    <property type="chains" value="A=3-161"/>
</dbReference>
<dbReference type="PDB" id="5SD0">
    <property type="method" value="X-ray"/>
    <property type="resolution" value="1.75 A"/>
    <property type="chains" value="A=3-161"/>
</dbReference>
<dbReference type="PDB" id="5SD1">
    <property type="method" value="X-ray"/>
    <property type="resolution" value="2.00 A"/>
    <property type="chains" value="A=3-161"/>
</dbReference>
<dbReference type="PDB" id="5SD2">
    <property type="method" value="X-ray"/>
    <property type="resolution" value="2.00 A"/>
    <property type="chains" value="A=3-161"/>
</dbReference>
<dbReference type="PDB" id="5SD3">
    <property type="method" value="X-ray"/>
    <property type="resolution" value="1.30 A"/>
    <property type="chains" value="A=3-161"/>
</dbReference>
<dbReference type="PDB" id="5SD4">
    <property type="method" value="X-ray"/>
    <property type="resolution" value="1.25 A"/>
    <property type="chains" value="A=3-161"/>
</dbReference>
<dbReference type="PDB" id="5SD5">
    <property type="method" value="X-ray"/>
    <property type="resolution" value="1.20 A"/>
    <property type="chains" value="A=3-161"/>
</dbReference>
<dbReference type="PDB" id="5U26">
    <property type="method" value="X-ray"/>
    <property type="resolution" value="1.85 A"/>
    <property type="chains" value="A=3-161"/>
</dbReference>
<dbReference type="PDB" id="5U27">
    <property type="method" value="X-ray"/>
    <property type="resolution" value="2.05 A"/>
    <property type="chains" value="A=3-161"/>
</dbReference>
<dbReference type="PDB" id="5UJF">
    <property type="method" value="X-ray"/>
    <property type="resolution" value="2.30 A"/>
    <property type="chains" value="A=3-161"/>
</dbReference>
<dbReference type="PDB" id="6DDP">
    <property type="method" value="X-ray"/>
    <property type="resolution" value="1.49 A"/>
    <property type="chains" value="A/B/C/D=3-161"/>
</dbReference>
<dbReference type="PDB" id="6DDS">
    <property type="method" value="X-ray"/>
    <property type="resolution" value="1.72 A"/>
    <property type="chains" value="A/B/C/D=3-161"/>
</dbReference>
<dbReference type="PDB" id="6DDW">
    <property type="method" value="X-ray"/>
    <property type="resolution" value="1.40 A"/>
    <property type="chains" value="A=1-161"/>
</dbReference>
<dbReference type="PDB" id="6NNC">
    <property type="method" value="X-ray"/>
    <property type="resolution" value="1.80 A"/>
    <property type="chains" value="A/B=3-161"/>
</dbReference>
<dbReference type="PDB" id="6NND">
    <property type="method" value="X-ray"/>
    <property type="resolution" value="1.70 A"/>
    <property type="chains" value="A/B=3-161"/>
</dbReference>
<dbReference type="PDB" id="6NNH">
    <property type="method" value="X-ray"/>
    <property type="resolution" value="1.52 A"/>
    <property type="chains" value="A/B=3-161"/>
</dbReference>
<dbReference type="PDB" id="6NNI">
    <property type="method" value="X-ray"/>
    <property type="resolution" value="1.56 A"/>
    <property type="chains" value="A/B=3-161"/>
</dbReference>
<dbReference type="PDB" id="6VS5">
    <property type="method" value="X-ray"/>
    <property type="resolution" value="1.76 A"/>
    <property type="chains" value="A/B=1-161"/>
</dbReference>
<dbReference type="PDB" id="6VS6">
    <property type="method" value="X-ray"/>
    <property type="resolution" value="1.85 A"/>
    <property type="chains" value="A/B=1-161"/>
</dbReference>
<dbReference type="PDB" id="6VS8">
    <property type="method" value="X-ray"/>
    <property type="resolution" value="1.83 A"/>
    <property type="chains" value="A/B=1-161"/>
</dbReference>
<dbReference type="PDB" id="6VSD">
    <property type="method" value="X-ray"/>
    <property type="resolution" value="1.69 A"/>
    <property type="chains" value="A/B=1-161"/>
</dbReference>
<dbReference type="PDB" id="6VSE">
    <property type="method" value="X-ray"/>
    <property type="resolution" value="1.76 A"/>
    <property type="chains" value="A/B=1-161"/>
</dbReference>
<dbReference type="PDB" id="6VSF">
    <property type="method" value="X-ray"/>
    <property type="resolution" value="2.01 A"/>
    <property type="chains" value="A/B=1-161"/>
</dbReference>
<dbReference type="PDB" id="6VSG">
    <property type="method" value="X-ray"/>
    <property type="resolution" value="2.30 A"/>
    <property type="chains" value="A/B=1-161"/>
</dbReference>
<dbReference type="PDB" id="6VV6">
    <property type="method" value="X-ray"/>
    <property type="resolution" value="2.23 A"/>
    <property type="chains" value="A/B=1-161"/>
</dbReference>
<dbReference type="PDB" id="6VVB">
    <property type="method" value="X-ray"/>
    <property type="resolution" value="1.45 A"/>
    <property type="chains" value="A=1-161"/>
</dbReference>
<dbReference type="PDB" id="8COP">
    <property type="method" value="X-ray"/>
    <property type="resolution" value="1.80 A"/>
    <property type="chains" value="A/B=1-161"/>
</dbReference>
<dbReference type="PDB" id="8COQ">
    <property type="method" value="X-ray"/>
    <property type="resolution" value="1.70 A"/>
    <property type="chains" value="A/B=1-161"/>
</dbReference>
<dbReference type="PDB" id="8COW">
    <property type="method" value="X-ray"/>
    <property type="resolution" value="1.60 A"/>
    <property type="chains" value="A/B=1-161"/>
</dbReference>
<dbReference type="PDB" id="8COX">
    <property type="method" value="X-ray"/>
    <property type="resolution" value="2.10 A"/>
    <property type="chains" value="A/B=1-161"/>
</dbReference>
<dbReference type="PDB" id="8CQ8">
    <property type="method" value="X-ray"/>
    <property type="resolution" value="1.80 A"/>
    <property type="chains" value="A/B=1-161"/>
</dbReference>
<dbReference type="PDB" id="8CQ9">
    <property type="method" value="X-ray"/>
    <property type="resolution" value="1.75 A"/>
    <property type="chains" value="A/B=1-161"/>
</dbReference>
<dbReference type="PDB" id="8CQA">
    <property type="method" value="X-ray"/>
    <property type="resolution" value="2.00 A"/>
    <property type="chains" value="A/B=3-161"/>
</dbReference>
<dbReference type="PDBsum" id="1DF7"/>
<dbReference type="PDBsum" id="1DG5"/>
<dbReference type="PDBsum" id="1DG7"/>
<dbReference type="PDBsum" id="1DG8"/>
<dbReference type="PDBsum" id="2CIG"/>
<dbReference type="PDBsum" id="4KL9"/>
<dbReference type="PDBsum" id="4KLX"/>
<dbReference type="PDBsum" id="4KM0"/>
<dbReference type="PDBsum" id="4KM2"/>
<dbReference type="PDBsum" id="4KNE"/>
<dbReference type="PDBsum" id="4M2X"/>
<dbReference type="PDBsum" id="5JA3"/>
<dbReference type="PDBsum" id="5SCM"/>
<dbReference type="PDBsum" id="5SCN"/>
<dbReference type="PDBsum" id="5SCO"/>
<dbReference type="PDBsum" id="5SCP"/>
<dbReference type="PDBsum" id="5SCQ"/>
<dbReference type="PDBsum" id="5SCR"/>
<dbReference type="PDBsum" id="5SCS"/>
<dbReference type="PDBsum" id="5SCT"/>
<dbReference type="PDBsum" id="5SCU"/>
<dbReference type="PDBsum" id="5SCV"/>
<dbReference type="PDBsum" id="5SCW"/>
<dbReference type="PDBsum" id="5SCX"/>
<dbReference type="PDBsum" id="5SCY"/>
<dbReference type="PDBsum" id="5SCZ"/>
<dbReference type="PDBsum" id="5SD0"/>
<dbReference type="PDBsum" id="5SD1"/>
<dbReference type="PDBsum" id="5SD2"/>
<dbReference type="PDBsum" id="5SD3"/>
<dbReference type="PDBsum" id="5SD4"/>
<dbReference type="PDBsum" id="5SD5"/>
<dbReference type="PDBsum" id="5U26"/>
<dbReference type="PDBsum" id="5U27"/>
<dbReference type="PDBsum" id="5UJF"/>
<dbReference type="PDBsum" id="6DDP"/>
<dbReference type="PDBsum" id="6DDS"/>
<dbReference type="PDBsum" id="6DDW"/>
<dbReference type="PDBsum" id="6NNC"/>
<dbReference type="PDBsum" id="6NND"/>
<dbReference type="PDBsum" id="6NNH"/>
<dbReference type="PDBsum" id="6NNI"/>
<dbReference type="PDBsum" id="6VS5"/>
<dbReference type="PDBsum" id="6VS6"/>
<dbReference type="PDBsum" id="6VS8"/>
<dbReference type="PDBsum" id="6VSD"/>
<dbReference type="PDBsum" id="6VSE"/>
<dbReference type="PDBsum" id="6VSF"/>
<dbReference type="PDBsum" id="6VSG"/>
<dbReference type="PDBsum" id="6VV6"/>
<dbReference type="PDBsum" id="6VVB"/>
<dbReference type="PDBsum" id="8COP"/>
<dbReference type="PDBsum" id="8COQ"/>
<dbReference type="PDBsum" id="8COW"/>
<dbReference type="PDBsum" id="8COX"/>
<dbReference type="PDBsum" id="8CQ8"/>
<dbReference type="PDBsum" id="8CQ9"/>
<dbReference type="PDBsum" id="8CQA"/>
<dbReference type="SMR" id="P9WNX1"/>
<dbReference type="FunCoup" id="P9WNX1">
    <property type="interactions" value="259"/>
</dbReference>
<dbReference type="STRING" id="83332.Rv2763c"/>
<dbReference type="BindingDB" id="P9WNX1"/>
<dbReference type="ChEMBL" id="CHEMBL6065"/>
<dbReference type="DrugBank" id="DB04007">
    <property type="generic name" value="Bromo-WR99210"/>
</dbReference>
<dbReference type="DrugBank" id="DB00951">
    <property type="generic name" value="Isoniazid"/>
</dbReference>
<dbReference type="DrugCentral" id="P9WNX1"/>
<dbReference type="PaxDb" id="83332-Rv2763c"/>
<dbReference type="DNASU" id="887777"/>
<dbReference type="GeneID" id="887777"/>
<dbReference type="KEGG" id="mtu:Rv2763c"/>
<dbReference type="PATRIC" id="fig|83332.12.peg.3080"/>
<dbReference type="TubercuList" id="Rv2763c"/>
<dbReference type="eggNOG" id="COG0262">
    <property type="taxonomic scope" value="Bacteria"/>
</dbReference>
<dbReference type="InParanoid" id="P9WNX1"/>
<dbReference type="OrthoDB" id="9804315at2"/>
<dbReference type="BRENDA" id="1.5.1.3">
    <property type="organism ID" value="3445"/>
</dbReference>
<dbReference type="UniPathway" id="UPA00077">
    <property type="reaction ID" value="UER00158"/>
</dbReference>
<dbReference type="EvolutionaryTrace" id="P9WNX1"/>
<dbReference type="Proteomes" id="UP000001584">
    <property type="component" value="Chromosome"/>
</dbReference>
<dbReference type="GO" id="GO:0005829">
    <property type="term" value="C:cytosol"/>
    <property type="evidence" value="ECO:0000318"/>
    <property type="project" value="GO_Central"/>
</dbReference>
<dbReference type="GO" id="GO:0004146">
    <property type="term" value="F:dihydrofolate reductase activity"/>
    <property type="evidence" value="ECO:0000314"/>
    <property type="project" value="MTBBASE"/>
</dbReference>
<dbReference type="GO" id="GO:0050661">
    <property type="term" value="F:NADP binding"/>
    <property type="evidence" value="ECO:0000318"/>
    <property type="project" value="GO_Central"/>
</dbReference>
<dbReference type="GO" id="GO:0070401">
    <property type="term" value="F:NADP+ binding"/>
    <property type="evidence" value="ECO:0000314"/>
    <property type="project" value="MTBBASE"/>
</dbReference>
<dbReference type="GO" id="GO:0046452">
    <property type="term" value="P:dihydrofolate metabolic process"/>
    <property type="evidence" value="ECO:0000318"/>
    <property type="project" value="GO_Central"/>
</dbReference>
<dbReference type="GO" id="GO:0046655">
    <property type="term" value="P:folic acid metabolic process"/>
    <property type="evidence" value="ECO:0000318"/>
    <property type="project" value="GO_Central"/>
</dbReference>
<dbReference type="GO" id="GO:0006730">
    <property type="term" value="P:one-carbon metabolic process"/>
    <property type="evidence" value="ECO:0000314"/>
    <property type="project" value="MTBBASE"/>
</dbReference>
<dbReference type="GO" id="GO:0046654">
    <property type="term" value="P:tetrahydrofolate biosynthetic process"/>
    <property type="evidence" value="ECO:0000314"/>
    <property type="project" value="MTBBASE"/>
</dbReference>
<dbReference type="CDD" id="cd00209">
    <property type="entry name" value="DHFR"/>
    <property type="match status" value="1"/>
</dbReference>
<dbReference type="FunFam" id="3.40.430.10:FF:000001">
    <property type="entry name" value="Dihydrofolate reductase"/>
    <property type="match status" value="1"/>
</dbReference>
<dbReference type="Gene3D" id="3.40.430.10">
    <property type="entry name" value="Dihydrofolate Reductase, subunit A"/>
    <property type="match status" value="1"/>
</dbReference>
<dbReference type="InterPro" id="IPR012259">
    <property type="entry name" value="DHFR"/>
</dbReference>
<dbReference type="InterPro" id="IPR024072">
    <property type="entry name" value="DHFR-like_dom_sf"/>
</dbReference>
<dbReference type="InterPro" id="IPR017925">
    <property type="entry name" value="DHFR_CS"/>
</dbReference>
<dbReference type="InterPro" id="IPR001796">
    <property type="entry name" value="DHFR_dom"/>
</dbReference>
<dbReference type="PANTHER" id="PTHR48069">
    <property type="entry name" value="DIHYDROFOLATE REDUCTASE"/>
    <property type="match status" value="1"/>
</dbReference>
<dbReference type="PANTHER" id="PTHR48069:SF3">
    <property type="entry name" value="DIHYDROFOLATE REDUCTASE"/>
    <property type="match status" value="1"/>
</dbReference>
<dbReference type="Pfam" id="PF00186">
    <property type="entry name" value="DHFR_1"/>
    <property type="match status" value="1"/>
</dbReference>
<dbReference type="PIRSF" id="PIRSF000194">
    <property type="entry name" value="DHFR"/>
    <property type="match status" value="1"/>
</dbReference>
<dbReference type="PRINTS" id="PR00070">
    <property type="entry name" value="DHFR"/>
</dbReference>
<dbReference type="SUPFAM" id="SSF53597">
    <property type="entry name" value="Dihydrofolate reductase-like"/>
    <property type="match status" value="1"/>
</dbReference>
<dbReference type="PROSITE" id="PS00075">
    <property type="entry name" value="DHFR_1"/>
    <property type="match status" value="1"/>
</dbReference>
<dbReference type="PROSITE" id="PS51330">
    <property type="entry name" value="DHFR_2"/>
    <property type="match status" value="1"/>
</dbReference>
<keyword id="KW-0002">3D-structure</keyword>
<keyword id="KW-0521">NADP</keyword>
<keyword id="KW-0554">One-carbon metabolism</keyword>
<keyword id="KW-0560">Oxidoreductase</keyword>
<keyword id="KW-1185">Reference proteome</keyword>
<reference key="1">
    <citation type="journal article" date="1998" name="Nature">
        <title>Deciphering the biology of Mycobacterium tuberculosis from the complete genome sequence.</title>
        <authorList>
            <person name="Cole S.T."/>
            <person name="Brosch R."/>
            <person name="Parkhill J."/>
            <person name="Garnier T."/>
            <person name="Churcher C.M."/>
            <person name="Harris D.E."/>
            <person name="Gordon S.V."/>
            <person name="Eiglmeier K."/>
            <person name="Gas S."/>
            <person name="Barry C.E. III"/>
            <person name="Tekaia F."/>
            <person name="Badcock K."/>
            <person name="Basham D."/>
            <person name="Brown D."/>
            <person name="Chillingworth T."/>
            <person name="Connor R."/>
            <person name="Davies R.M."/>
            <person name="Devlin K."/>
            <person name="Feltwell T."/>
            <person name="Gentles S."/>
            <person name="Hamlin N."/>
            <person name="Holroyd S."/>
            <person name="Hornsby T."/>
            <person name="Jagels K."/>
            <person name="Krogh A."/>
            <person name="McLean J."/>
            <person name="Moule S."/>
            <person name="Murphy L.D."/>
            <person name="Oliver S."/>
            <person name="Osborne J."/>
            <person name="Quail M.A."/>
            <person name="Rajandream M.A."/>
            <person name="Rogers J."/>
            <person name="Rutter S."/>
            <person name="Seeger K."/>
            <person name="Skelton S."/>
            <person name="Squares S."/>
            <person name="Squares R."/>
            <person name="Sulston J.E."/>
            <person name="Taylor K."/>
            <person name="Whitehead S."/>
            <person name="Barrell B.G."/>
        </authorList>
    </citation>
    <scope>NUCLEOTIDE SEQUENCE [LARGE SCALE GENOMIC DNA]</scope>
    <source>
        <strain>ATCC 25618 / H37Rv</strain>
    </source>
</reference>
<reference key="2">
    <citation type="journal article" date="2011" name="Mol. Cell. Proteomics">
        <title>Proteogenomic analysis of Mycobacterium tuberculosis by high resolution mass spectrometry.</title>
        <authorList>
            <person name="Kelkar D.S."/>
            <person name="Kumar D."/>
            <person name="Kumar P."/>
            <person name="Balakrishnan L."/>
            <person name="Muthusamy B."/>
            <person name="Yadav A.K."/>
            <person name="Shrivastava P."/>
            <person name="Marimuthu A."/>
            <person name="Anand S."/>
            <person name="Sundaram H."/>
            <person name="Kingsbury R."/>
            <person name="Harsha H.C."/>
            <person name="Nair B."/>
            <person name="Prasad T.S."/>
            <person name="Chauhan D.S."/>
            <person name="Katoch K."/>
            <person name="Katoch V.M."/>
            <person name="Kumar P."/>
            <person name="Chaerkady R."/>
            <person name="Ramachandran S."/>
            <person name="Dash D."/>
            <person name="Pandey A."/>
        </authorList>
    </citation>
    <scope>IDENTIFICATION BY MASS SPECTROMETRY [LARGE SCALE ANALYSIS]</scope>
    <source>
        <strain>ATCC 25618 / H37Rv</strain>
    </source>
</reference>
<reference key="3">
    <citation type="journal article" date="2000" name="J. Mol. Biol.">
        <title>Three-dimensional structure of M. tuberculosis dihydrofolate reductase reveals opportunities for the design of novel tuberculosis drugs.</title>
        <authorList>
            <person name="Li R."/>
            <person name="Sirawaraporn R."/>
            <person name="Chitnumsub P."/>
            <person name="Sirawaraporn W."/>
            <person name="Wooden J."/>
            <person name="Athappilly F."/>
            <person name="Turley S."/>
            <person name="Hol W.G.J."/>
        </authorList>
    </citation>
    <scope>X-RAY CRYSTALLOGRAPHY (1.7 ANGSTROMS)</scope>
</reference>
<reference key="4">
    <citation type="journal article" date="2006" name="Nat. Struct. Mol. Biol.">
        <title>Mycobacterium tuberculosis dihydrofolate reductase is a target for isoniazid.</title>
        <authorList>
            <person name="Argyrou A."/>
            <person name="Vetting M.W."/>
            <person name="Aladegbami B."/>
            <person name="Blanchard J.S."/>
        </authorList>
    </citation>
    <scope>X-RAY CRYSTALLOGRAPHY (1.9 ANGSTROMS) IN COMPLEX WITH ISONIAZID-NADP ADDUCT</scope>
    <scope>ACTIVITY REGULATION</scope>
</reference>
<comment type="function">
    <text>Key enzyme in folate metabolism. Catalyzes an essential reaction for de novo glycine and purine synthesis, and for DNA precursor synthesis.</text>
</comment>
<comment type="catalytic activity">
    <reaction evidence="1">
        <text>(6S)-5,6,7,8-tetrahydrofolate + NADP(+) = 7,8-dihydrofolate + NADPH + H(+)</text>
        <dbReference type="Rhea" id="RHEA:15009"/>
        <dbReference type="ChEBI" id="CHEBI:15378"/>
        <dbReference type="ChEBI" id="CHEBI:57451"/>
        <dbReference type="ChEBI" id="CHEBI:57453"/>
        <dbReference type="ChEBI" id="CHEBI:57783"/>
        <dbReference type="ChEBI" id="CHEBI:58349"/>
        <dbReference type="EC" id="1.5.1.3"/>
    </reaction>
</comment>
<comment type="activity regulation">
    <text evidence="2">Inhibited by isoniazid metabolites. The prodrug isoniazid is metabolized to isoniazid-NADP adducts that inhibit the enzyme at subnanomolar concentration.</text>
</comment>
<comment type="pathway">
    <text>Cofactor biosynthesis; tetrahydrofolate biosynthesis; 5,6,7,8-tetrahydrofolate from 7,8-dihydrofolate: step 1/1.</text>
</comment>
<comment type="similarity">
    <text evidence="3">Belongs to the dihydrofolate reductase family.</text>
</comment>
<comment type="sequence caution">
    <conflict type="erroneous initiation">
        <sequence resource="EMBL-CDS" id="CCP45562"/>
    </conflict>
    <text>Truncated N-terminus.</text>
</comment>
<evidence type="ECO:0000255" key="1">
    <source>
        <dbReference type="PROSITE-ProRule" id="PRU00660"/>
    </source>
</evidence>
<evidence type="ECO:0000269" key="2">
    <source>
    </source>
</evidence>
<evidence type="ECO:0000305" key="3"/>
<evidence type="ECO:0007829" key="4">
    <source>
        <dbReference type="PDB" id="5SD5"/>
    </source>
</evidence>
<evidence type="ECO:0007829" key="5">
    <source>
        <dbReference type="PDB" id="6DDP"/>
    </source>
</evidence>
<feature type="chain" id="PRO_0000186400" description="Dihydrofolate reductase">
    <location>
        <begin position="1"/>
        <end position="161"/>
    </location>
</feature>
<feature type="domain" description="DHFR" evidence="1">
    <location>
        <begin position="1"/>
        <end position="160"/>
    </location>
</feature>
<feature type="binding site">
    <location>
        <begin position="7"/>
        <end position="9"/>
    </location>
    <ligand>
        <name>substrate</name>
    </ligand>
</feature>
<feature type="binding site">
    <location>
        <begin position="8"/>
        <end position="9"/>
    </location>
    <ligand>
        <name>NADP(+)</name>
        <dbReference type="ChEBI" id="CHEBI:58349"/>
    </ligand>
</feature>
<feature type="binding site">
    <location>
        <begin position="16"/>
        <end position="21"/>
    </location>
    <ligand>
        <name>NADP(+)</name>
        <dbReference type="ChEBI" id="CHEBI:58349"/>
    </ligand>
</feature>
<feature type="binding site">
    <location>
        <position position="29"/>
    </location>
    <ligand>
        <name>substrate</name>
    </ligand>
</feature>
<feature type="binding site">
    <location>
        <position position="34"/>
    </location>
    <ligand>
        <name>substrate</name>
    </ligand>
</feature>
<feature type="binding site">
    <location>
        <begin position="45"/>
        <end position="48"/>
    </location>
    <ligand>
        <name>NADP(+)</name>
        <dbReference type="ChEBI" id="CHEBI:58349"/>
    </ligand>
</feature>
<feature type="binding site">
    <location>
        <position position="62"/>
    </location>
    <ligand>
        <name>substrate</name>
    </ligand>
</feature>
<feature type="binding site">
    <location>
        <begin position="67"/>
        <end position="70"/>
    </location>
    <ligand>
        <name>NADP(+)</name>
        <dbReference type="ChEBI" id="CHEBI:58349"/>
    </ligand>
</feature>
<feature type="binding site">
    <location>
        <position position="82"/>
    </location>
    <ligand>
        <name>NADP(+)</name>
        <dbReference type="ChEBI" id="CHEBI:58349"/>
    </ligand>
</feature>
<feature type="binding site">
    <location>
        <begin position="96"/>
        <end position="101"/>
    </location>
    <ligand>
        <name>NADP(+)</name>
        <dbReference type="ChEBI" id="CHEBI:58349"/>
    </ligand>
</feature>
<feature type="binding site">
    <location>
        <position position="102"/>
    </location>
    <ligand>
        <name>substrate</name>
    </ligand>
</feature>
<feature type="binding site">
    <location>
        <position position="115"/>
    </location>
    <ligand>
        <name>substrate</name>
    </ligand>
</feature>
<feature type="strand" evidence="4">
    <location>
        <begin position="3"/>
        <end position="11"/>
    </location>
</feature>
<feature type="strand" evidence="4">
    <location>
        <begin position="15"/>
        <end position="18"/>
    </location>
</feature>
<feature type="helix" evidence="4">
    <location>
        <begin position="27"/>
        <end position="37"/>
    </location>
</feature>
<feature type="strand" evidence="4">
    <location>
        <begin position="40"/>
        <end position="45"/>
    </location>
</feature>
<feature type="helix" evidence="4">
    <location>
        <begin position="46"/>
        <end position="51"/>
    </location>
</feature>
<feature type="turn" evidence="4">
    <location>
        <begin position="54"/>
        <end position="56"/>
    </location>
</feature>
<feature type="strand" evidence="4">
    <location>
        <begin position="62"/>
        <end position="67"/>
    </location>
</feature>
<feature type="strand" evidence="4">
    <location>
        <begin position="78"/>
        <end position="83"/>
    </location>
</feature>
<feature type="helix" evidence="4">
    <location>
        <begin position="84"/>
        <end position="87"/>
    </location>
</feature>
<feature type="strand" evidence="4">
    <location>
        <begin position="90"/>
        <end position="95"/>
    </location>
</feature>
<feature type="helix" evidence="4">
    <location>
        <begin position="99"/>
        <end position="105"/>
    </location>
</feature>
<feature type="helix" evidence="4">
    <location>
        <begin position="106"/>
        <end position="108"/>
    </location>
</feature>
<feature type="strand" evidence="4">
    <location>
        <begin position="111"/>
        <end position="117"/>
    </location>
</feature>
<feature type="strand" evidence="4">
    <location>
        <begin position="138"/>
        <end position="141"/>
    </location>
</feature>
<feature type="strand" evidence="5">
    <location>
        <begin position="148"/>
        <end position="150"/>
    </location>
</feature>
<feature type="strand" evidence="4">
    <location>
        <begin position="152"/>
        <end position="159"/>
    </location>
</feature>
<name>DYR_MYCTU</name>
<accession>P9WNX1</accession>
<accession>L0TDH5</accession>
<accession>O33305</accession>
<accession>P0A546</accession>
<organism>
    <name type="scientific">Mycobacterium tuberculosis (strain ATCC 25618 / H37Rv)</name>
    <dbReference type="NCBI Taxonomy" id="83332"/>
    <lineage>
        <taxon>Bacteria</taxon>
        <taxon>Bacillati</taxon>
        <taxon>Actinomycetota</taxon>
        <taxon>Actinomycetes</taxon>
        <taxon>Mycobacteriales</taxon>
        <taxon>Mycobacteriaceae</taxon>
        <taxon>Mycobacterium</taxon>
        <taxon>Mycobacterium tuberculosis complex</taxon>
    </lineage>
</organism>